<evidence type="ECO:0000255" key="1">
    <source>
        <dbReference type="PROSITE-ProRule" id="PRU00198"/>
    </source>
</evidence>
<evidence type="ECO:0000269" key="2">
    <source>
    </source>
</evidence>
<evidence type="ECO:0000269" key="3">
    <source>
    </source>
</evidence>
<evidence type="ECO:0000305" key="4"/>
<name>RSBRD_BACSU</name>
<gene>
    <name type="primary">rsbRD</name>
    <name type="synonym">yqhA</name>
    <name type="ordered locus">BSU24760</name>
</gene>
<sequence>MIALDQHLTEHKKDITQQWLEVCTSNGSWLYSAKDQQKLEQKLKDQHELLVTIVAKSLRKEDVEDELNRWSLQCARDRAVHEVTVTQSVGQFNTFRHIMFEWIHKFSEASSQDISIQEFYEWSRILNQNIDEIIEVFTEEYHQVTMIQLNAQKEMINELSAPIMPITDGIGILPLVGEIDTHRARTILESVLEQCSALKLSYLFLDISGVPIVDTMVAYQIFKVIDSTKLLGIETIISGIRPEIAQTVVKLGLDFSNVKTEQSLAKALANKGFKIKEC</sequence>
<protein>
    <recommendedName>
        <fullName>RsbT co-antagonist protein RsbRD</fullName>
    </recommendedName>
    <alternativeName>
        <fullName>Stressosome protein RsbRD</fullName>
    </alternativeName>
</protein>
<proteinExistence type="evidence at protein level"/>
<organism>
    <name type="scientific">Bacillus subtilis (strain 168)</name>
    <dbReference type="NCBI Taxonomy" id="224308"/>
    <lineage>
        <taxon>Bacteria</taxon>
        <taxon>Bacillati</taxon>
        <taxon>Bacillota</taxon>
        <taxon>Bacilli</taxon>
        <taxon>Bacillales</taxon>
        <taxon>Bacillaceae</taxon>
        <taxon>Bacillus</taxon>
    </lineage>
</organism>
<feature type="chain" id="PRO_0000049817" description="RsbT co-antagonist protein RsbRD">
    <location>
        <begin position="1"/>
        <end position="278"/>
    </location>
</feature>
<feature type="domain" description="STAS" evidence="1">
    <location>
        <begin position="160"/>
        <end position="271"/>
    </location>
</feature>
<feature type="modified residue" description="Phosphothreonine" evidence="3">
    <location>
        <position position="181"/>
    </location>
</feature>
<feature type="sequence conflict" description="In Ref. 1; BAA12530." evidence="4" ref="1">
    <original>E</original>
    <variation>G</variation>
    <location>
        <position position="40"/>
    </location>
</feature>
<feature type="sequence conflict" description="In Ref. 1; BAA12530." evidence="4" ref="1">
    <original>V</original>
    <variation>F</variation>
    <location>
        <position position="89"/>
    </location>
</feature>
<dbReference type="EMBL" id="D84432">
    <property type="protein sequence ID" value="BAA12530.1"/>
    <property type="molecule type" value="Genomic_DNA"/>
</dbReference>
<dbReference type="EMBL" id="AL009126">
    <property type="protein sequence ID" value="CAB14407.2"/>
    <property type="molecule type" value="Genomic_DNA"/>
</dbReference>
<dbReference type="PIR" id="D69958">
    <property type="entry name" value="D69958"/>
</dbReference>
<dbReference type="RefSeq" id="NP_390356.2">
    <property type="nucleotide sequence ID" value="NC_000964.3"/>
</dbReference>
<dbReference type="RefSeq" id="WP_004398754.1">
    <property type="nucleotide sequence ID" value="NZ_OZ025638.1"/>
</dbReference>
<dbReference type="SMR" id="P54504"/>
<dbReference type="FunCoup" id="P54504">
    <property type="interactions" value="40"/>
</dbReference>
<dbReference type="STRING" id="224308.BSU24760"/>
<dbReference type="iPTMnet" id="P54504"/>
<dbReference type="jPOST" id="P54504"/>
<dbReference type="PaxDb" id="224308-BSU24760"/>
<dbReference type="DNASU" id="938513"/>
<dbReference type="EnsemblBacteria" id="CAB14407">
    <property type="protein sequence ID" value="CAB14407"/>
    <property type="gene ID" value="BSU_24760"/>
</dbReference>
<dbReference type="GeneID" id="938513"/>
<dbReference type="KEGG" id="bsu:BSU24760"/>
<dbReference type="PATRIC" id="fig|224308.179.peg.2695"/>
<dbReference type="eggNOG" id="COG1366">
    <property type="taxonomic scope" value="Bacteria"/>
</dbReference>
<dbReference type="InParanoid" id="P54504"/>
<dbReference type="OrthoDB" id="9800154at2"/>
<dbReference type="PhylomeDB" id="P54504"/>
<dbReference type="BioCyc" id="BSUB:BSU24760-MONOMER"/>
<dbReference type="Proteomes" id="UP000001570">
    <property type="component" value="Chromosome"/>
</dbReference>
<dbReference type="CDD" id="cd07041">
    <property type="entry name" value="STAS_RsbR_RsbS_like"/>
    <property type="match status" value="1"/>
</dbReference>
<dbReference type="Gene3D" id="1.10.490.70">
    <property type="entry name" value="Histidine kinase N-terminal domain"/>
    <property type="match status" value="1"/>
</dbReference>
<dbReference type="Gene3D" id="3.30.750.24">
    <property type="entry name" value="STAS domain"/>
    <property type="match status" value="1"/>
</dbReference>
<dbReference type="InterPro" id="IPR051932">
    <property type="entry name" value="Bact_StressResp_Reg"/>
</dbReference>
<dbReference type="InterPro" id="IPR025751">
    <property type="entry name" value="RsbRD_N_dom"/>
</dbReference>
<dbReference type="InterPro" id="IPR002645">
    <property type="entry name" value="STAS_dom"/>
</dbReference>
<dbReference type="InterPro" id="IPR036513">
    <property type="entry name" value="STAS_dom_sf"/>
</dbReference>
<dbReference type="PANTHER" id="PTHR33745">
    <property type="entry name" value="RSBT ANTAGONIST PROTEIN RSBS-RELATED"/>
    <property type="match status" value="1"/>
</dbReference>
<dbReference type="PANTHER" id="PTHR33745:SF3">
    <property type="entry name" value="RSBT CO-ANTAGONIST PROTEIN RSBRC"/>
    <property type="match status" value="1"/>
</dbReference>
<dbReference type="Pfam" id="PF14361">
    <property type="entry name" value="RsbRD_N"/>
    <property type="match status" value="1"/>
</dbReference>
<dbReference type="Pfam" id="PF01740">
    <property type="entry name" value="STAS"/>
    <property type="match status" value="1"/>
</dbReference>
<dbReference type="SUPFAM" id="SSF52091">
    <property type="entry name" value="SpoIIaa-like"/>
    <property type="match status" value="1"/>
</dbReference>
<dbReference type="PROSITE" id="PS50801">
    <property type="entry name" value="STAS"/>
    <property type="match status" value="1"/>
</dbReference>
<reference key="1">
    <citation type="journal article" date="1996" name="Microbiology">
        <title>Systematic sequencing of the 283 kb 210 degrees-232 degrees region of the Bacillus subtilis genome containing the skin element and many sporulation genes.</title>
        <authorList>
            <person name="Mizuno M."/>
            <person name="Masuda S."/>
            <person name="Takemaru K."/>
            <person name="Hosono S."/>
            <person name="Sato T."/>
            <person name="Takeuchi M."/>
            <person name="Kobayashi Y."/>
        </authorList>
    </citation>
    <scope>NUCLEOTIDE SEQUENCE [GENOMIC DNA]</scope>
    <source>
        <strain>168 / JH642</strain>
    </source>
</reference>
<reference key="2">
    <citation type="journal article" date="1997" name="Nature">
        <title>The complete genome sequence of the Gram-positive bacterium Bacillus subtilis.</title>
        <authorList>
            <person name="Kunst F."/>
            <person name="Ogasawara N."/>
            <person name="Moszer I."/>
            <person name="Albertini A.M."/>
            <person name="Alloni G."/>
            <person name="Azevedo V."/>
            <person name="Bertero M.G."/>
            <person name="Bessieres P."/>
            <person name="Bolotin A."/>
            <person name="Borchert S."/>
            <person name="Borriss R."/>
            <person name="Boursier L."/>
            <person name="Brans A."/>
            <person name="Braun M."/>
            <person name="Brignell S.C."/>
            <person name="Bron S."/>
            <person name="Brouillet S."/>
            <person name="Bruschi C.V."/>
            <person name="Caldwell B."/>
            <person name="Capuano V."/>
            <person name="Carter N.M."/>
            <person name="Choi S.-K."/>
            <person name="Codani J.-J."/>
            <person name="Connerton I.F."/>
            <person name="Cummings N.J."/>
            <person name="Daniel R.A."/>
            <person name="Denizot F."/>
            <person name="Devine K.M."/>
            <person name="Duesterhoeft A."/>
            <person name="Ehrlich S.D."/>
            <person name="Emmerson P.T."/>
            <person name="Entian K.-D."/>
            <person name="Errington J."/>
            <person name="Fabret C."/>
            <person name="Ferrari E."/>
            <person name="Foulger D."/>
            <person name="Fritz C."/>
            <person name="Fujita M."/>
            <person name="Fujita Y."/>
            <person name="Fuma S."/>
            <person name="Galizzi A."/>
            <person name="Galleron N."/>
            <person name="Ghim S.-Y."/>
            <person name="Glaser P."/>
            <person name="Goffeau A."/>
            <person name="Golightly E.J."/>
            <person name="Grandi G."/>
            <person name="Guiseppi G."/>
            <person name="Guy B.J."/>
            <person name="Haga K."/>
            <person name="Haiech J."/>
            <person name="Harwood C.R."/>
            <person name="Henaut A."/>
            <person name="Hilbert H."/>
            <person name="Holsappel S."/>
            <person name="Hosono S."/>
            <person name="Hullo M.-F."/>
            <person name="Itaya M."/>
            <person name="Jones L.-M."/>
            <person name="Joris B."/>
            <person name="Karamata D."/>
            <person name="Kasahara Y."/>
            <person name="Klaerr-Blanchard M."/>
            <person name="Klein C."/>
            <person name="Kobayashi Y."/>
            <person name="Koetter P."/>
            <person name="Koningstein G."/>
            <person name="Krogh S."/>
            <person name="Kumano M."/>
            <person name="Kurita K."/>
            <person name="Lapidus A."/>
            <person name="Lardinois S."/>
            <person name="Lauber J."/>
            <person name="Lazarevic V."/>
            <person name="Lee S.-M."/>
            <person name="Levine A."/>
            <person name="Liu H."/>
            <person name="Masuda S."/>
            <person name="Mauel C."/>
            <person name="Medigue C."/>
            <person name="Medina N."/>
            <person name="Mellado R.P."/>
            <person name="Mizuno M."/>
            <person name="Moestl D."/>
            <person name="Nakai S."/>
            <person name="Noback M."/>
            <person name="Noone D."/>
            <person name="O'Reilly M."/>
            <person name="Ogawa K."/>
            <person name="Ogiwara A."/>
            <person name="Oudega B."/>
            <person name="Park S.-H."/>
            <person name="Parro V."/>
            <person name="Pohl T.M."/>
            <person name="Portetelle D."/>
            <person name="Porwollik S."/>
            <person name="Prescott A.M."/>
            <person name="Presecan E."/>
            <person name="Pujic P."/>
            <person name="Purnelle B."/>
            <person name="Rapoport G."/>
            <person name="Rey M."/>
            <person name="Reynolds S."/>
            <person name="Rieger M."/>
            <person name="Rivolta C."/>
            <person name="Rocha E."/>
            <person name="Roche B."/>
            <person name="Rose M."/>
            <person name="Sadaie Y."/>
            <person name="Sato T."/>
            <person name="Scanlan E."/>
            <person name="Schleich S."/>
            <person name="Schroeter R."/>
            <person name="Scoffone F."/>
            <person name="Sekiguchi J."/>
            <person name="Sekowska A."/>
            <person name="Seror S.J."/>
            <person name="Serror P."/>
            <person name="Shin B.-S."/>
            <person name="Soldo B."/>
            <person name="Sorokin A."/>
            <person name="Tacconi E."/>
            <person name="Takagi T."/>
            <person name="Takahashi H."/>
            <person name="Takemaru K."/>
            <person name="Takeuchi M."/>
            <person name="Tamakoshi A."/>
            <person name="Tanaka T."/>
            <person name="Terpstra P."/>
            <person name="Tognoni A."/>
            <person name="Tosato V."/>
            <person name="Uchiyama S."/>
            <person name="Vandenbol M."/>
            <person name="Vannier F."/>
            <person name="Vassarotti A."/>
            <person name="Viari A."/>
            <person name="Wambutt R."/>
            <person name="Wedler E."/>
            <person name="Wedler H."/>
            <person name="Weitzenegger T."/>
            <person name="Winters P."/>
            <person name="Wipat A."/>
            <person name="Yamamoto H."/>
            <person name="Yamane K."/>
            <person name="Yasumoto K."/>
            <person name="Yata K."/>
            <person name="Yoshida K."/>
            <person name="Yoshikawa H.-F."/>
            <person name="Zumstein E."/>
            <person name="Yoshikawa H."/>
            <person name="Danchin A."/>
        </authorList>
    </citation>
    <scope>NUCLEOTIDE SEQUENCE [LARGE SCALE GENOMIC DNA]</scope>
    <source>
        <strain>168</strain>
    </source>
</reference>
<reference key="3">
    <citation type="journal article" date="2009" name="Microbiology">
        <title>From a consortium sequence to a unified sequence: the Bacillus subtilis 168 reference genome a decade later.</title>
        <authorList>
            <person name="Barbe V."/>
            <person name="Cruveiller S."/>
            <person name="Kunst F."/>
            <person name="Lenoble P."/>
            <person name="Meurice G."/>
            <person name="Sekowska A."/>
            <person name="Vallenet D."/>
            <person name="Wang T."/>
            <person name="Moszer I."/>
            <person name="Medigue C."/>
            <person name="Danchin A."/>
        </authorList>
    </citation>
    <scope>SEQUENCE REVISION TO 40 AND 89</scope>
</reference>
<reference key="4">
    <citation type="journal article" date="2001" name="J. Bacteriol.">
        <title>New family of regulators in the environmental signaling pathway which activates the general stress transcription factor sigma(B) of Bacillus subtilis.</title>
        <authorList>
            <person name="Akbar S."/>
            <person name="Gaidenko T.A."/>
            <person name="Kang C.M."/>
            <person name="O'Reilly M."/>
            <person name="Devine K.M."/>
            <person name="Price C.W."/>
        </authorList>
    </citation>
    <scope>FUNCTION</scope>
    <scope>PHOSPHORYLATION BY RSBT</scope>
    <scope>COMPLEX SUGGESTION</scope>
    <scope>DISRUPTION PHENOTYPE</scope>
    <source>
        <strain>168 / Marburg / ATCC 6051 / DSM 10 / JCM 1465 / NBRC 13719 / NCIMB 3610 / NRRL NRS-744 / VKM B-501</strain>
    </source>
</reference>
<reference key="5">
    <citation type="journal article" date="2004" name="J. Mol. Biol.">
        <title>A multicomponent protein complex mediates environmental stress signaling in Bacillus subtilis.</title>
        <authorList>
            <person name="Kim T.-J."/>
            <person name="Gaidenko T.A."/>
            <person name="Price C.W."/>
        </authorList>
    </citation>
    <scope>FUNCTION</scope>
    <scope>POSSIBLE SUBUNIT</scope>
    <source>
        <strain>168 / Marburg / ATCC 6051 / DSM 10 / JCM 1465 / NBRC 13719 / NCIMB 3610 / NRRL NRS-744 / VKM B-501</strain>
    </source>
</reference>
<reference key="6">
    <citation type="journal article" date="2007" name="Mol. Cell. Proteomics">
        <title>The serine/threonine/tyrosine phosphoproteome of the model bacterium Bacillus subtilis.</title>
        <authorList>
            <person name="Macek B."/>
            <person name="Mijakovic I."/>
            <person name="Olsen J.V."/>
            <person name="Gnad F."/>
            <person name="Kumar C."/>
            <person name="Jensen P.R."/>
            <person name="Mann M."/>
        </authorList>
    </citation>
    <scope>PHOSPHORYLATION [LARGE SCALE ANALYSIS] AT THR-181</scope>
    <scope>IDENTIFICATION BY MASS SPECTROMETRY</scope>
    <source>
        <strain>168</strain>
    </source>
</reference>
<keyword id="KW-0597">Phosphoprotein</keyword>
<keyword id="KW-1185">Reference proteome</keyword>
<accession>P54504</accession>
<comment type="function">
    <text>One of 4 functionally non-identical RsbR paralogs, it functions in the environmental signaling branch of the general stress response.</text>
</comment>
<comment type="function">
    <text>Negative regulator of sigma-B activity. Non-phosphorylated RsbS binds to RsbT, preventing its association with RsbU. Requires any one of RsbRA, RsbRB, RsbRC or RsbRD to sequester RsbT. When RsbS and the RsbR paralog(s) are phosphorylated, they release RsbT, which can then bind and activate RsbU.</text>
</comment>
<comment type="subunit">
    <text>Probably present in the stressosome with RsbRA, RsbRB, RsbRC and RsbS.</text>
</comment>
<comment type="PTM">
    <text evidence="2 3">Phosphorylated by RsbT.</text>
</comment>
<comment type="disruption phenotype">
    <text evidence="2">Cells lacking this gene have no visible phenotype is response to salt, ethanol or energy stress. However cells with multiple disruption (RsbRA, RsbRB and RsbRD) have an increased basal level of sigma-B, indicating this protein is a negative regulator of sigma-B.</text>
</comment>